<evidence type="ECO:0000255" key="1">
    <source>
        <dbReference type="HAMAP-Rule" id="MF_00361"/>
    </source>
</evidence>
<name>NADK2_BACHK</name>
<accession>Q6HCN5</accession>
<organism>
    <name type="scientific">Bacillus thuringiensis subsp. konkukian (strain 97-27)</name>
    <dbReference type="NCBI Taxonomy" id="281309"/>
    <lineage>
        <taxon>Bacteria</taxon>
        <taxon>Bacillati</taxon>
        <taxon>Bacillota</taxon>
        <taxon>Bacilli</taxon>
        <taxon>Bacillales</taxon>
        <taxon>Bacillaceae</taxon>
        <taxon>Bacillus</taxon>
        <taxon>Bacillus cereus group</taxon>
    </lineage>
</organism>
<comment type="function">
    <text evidence="1">Involved in the regulation of the intracellular balance of NAD and NADP, and is a key enzyme in the biosynthesis of NADP. Catalyzes specifically the phosphorylation on 2'-hydroxyl of the adenosine moiety of NAD to yield NADP.</text>
</comment>
<comment type="catalytic activity">
    <reaction evidence="1">
        <text>NAD(+) + ATP = ADP + NADP(+) + H(+)</text>
        <dbReference type="Rhea" id="RHEA:18629"/>
        <dbReference type="ChEBI" id="CHEBI:15378"/>
        <dbReference type="ChEBI" id="CHEBI:30616"/>
        <dbReference type="ChEBI" id="CHEBI:57540"/>
        <dbReference type="ChEBI" id="CHEBI:58349"/>
        <dbReference type="ChEBI" id="CHEBI:456216"/>
        <dbReference type="EC" id="2.7.1.23"/>
    </reaction>
</comment>
<comment type="cofactor">
    <cofactor evidence="1">
        <name>a divalent metal cation</name>
        <dbReference type="ChEBI" id="CHEBI:60240"/>
    </cofactor>
</comment>
<comment type="subcellular location">
    <subcellularLocation>
        <location evidence="1">Cytoplasm</location>
    </subcellularLocation>
</comment>
<comment type="similarity">
    <text evidence="1">Belongs to the NAD kinase family.</text>
</comment>
<feature type="chain" id="PRO_0000229607" description="NAD kinase 2">
    <location>
        <begin position="1"/>
        <end position="267"/>
    </location>
</feature>
<feature type="active site" description="Proton acceptor" evidence="1">
    <location>
        <position position="52"/>
    </location>
</feature>
<feature type="binding site" evidence="1">
    <location>
        <begin position="52"/>
        <end position="53"/>
    </location>
    <ligand>
        <name>NAD(+)</name>
        <dbReference type="ChEBI" id="CHEBI:57540"/>
    </ligand>
</feature>
<feature type="binding site" evidence="1">
    <location>
        <begin position="124"/>
        <end position="125"/>
    </location>
    <ligand>
        <name>NAD(+)</name>
        <dbReference type="ChEBI" id="CHEBI:57540"/>
    </ligand>
</feature>
<feature type="binding site" evidence="1">
    <location>
        <position position="151"/>
    </location>
    <ligand>
        <name>NAD(+)</name>
        <dbReference type="ChEBI" id="CHEBI:57540"/>
    </ligand>
</feature>
<feature type="binding site" evidence="1">
    <location>
        <position position="153"/>
    </location>
    <ligand>
        <name>NAD(+)</name>
        <dbReference type="ChEBI" id="CHEBI:57540"/>
    </ligand>
</feature>
<feature type="binding site" evidence="1">
    <location>
        <begin position="164"/>
        <end position="169"/>
    </location>
    <ligand>
        <name>NAD(+)</name>
        <dbReference type="ChEBI" id="CHEBI:57540"/>
    </ligand>
</feature>
<feature type="binding site" evidence="1">
    <location>
        <position position="188"/>
    </location>
    <ligand>
        <name>NAD(+)</name>
        <dbReference type="ChEBI" id="CHEBI:57540"/>
    </ligand>
</feature>
<protein>
    <recommendedName>
        <fullName evidence="1">NAD kinase 2</fullName>
        <ecNumber evidence="1">2.7.1.23</ecNumber>
    </recommendedName>
    <alternativeName>
        <fullName evidence="1">ATP-dependent NAD kinase 2</fullName>
    </alternativeName>
</protein>
<proteinExistence type="inferred from homology"/>
<gene>
    <name evidence="1" type="primary">nadK2</name>
    <name type="ordered locus">BT9727_4376</name>
</gene>
<reference key="1">
    <citation type="journal article" date="2006" name="J. Bacteriol.">
        <title>Pathogenomic sequence analysis of Bacillus cereus and Bacillus thuringiensis isolates closely related to Bacillus anthracis.</title>
        <authorList>
            <person name="Han C.S."/>
            <person name="Xie G."/>
            <person name="Challacombe J.F."/>
            <person name="Altherr M.R."/>
            <person name="Bhotika S.S."/>
            <person name="Bruce D."/>
            <person name="Campbell C.S."/>
            <person name="Campbell M.L."/>
            <person name="Chen J."/>
            <person name="Chertkov O."/>
            <person name="Cleland C."/>
            <person name="Dimitrijevic M."/>
            <person name="Doggett N.A."/>
            <person name="Fawcett J.J."/>
            <person name="Glavina T."/>
            <person name="Goodwin L.A."/>
            <person name="Hill K.K."/>
            <person name="Hitchcock P."/>
            <person name="Jackson P.J."/>
            <person name="Keim P."/>
            <person name="Kewalramani A.R."/>
            <person name="Longmire J."/>
            <person name="Lucas S."/>
            <person name="Malfatti S."/>
            <person name="McMurry K."/>
            <person name="Meincke L.J."/>
            <person name="Misra M."/>
            <person name="Moseman B.L."/>
            <person name="Mundt M."/>
            <person name="Munk A.C."/>
            <person name="Okinaka R.T."/>
            <person name="Parson-Quintana B."/>
            <person name="Reilly L.P."/>
            <person name="Richardson P."/>
            <person name="Robinson D.L."/>
            <person name="Rubin E."/>
            <person name="Saunders E."/>
            <person name="Tapia R."/>
            <person name="Tesmer J.G."/>
            <person name="Thayer N."/>
            <person name="Thompson L.S."/>
            <person name="Tice H."/>
            <person name="Ticknor L.O."/>
            <person name="Wills P.L."/>
            <person name="Brettin T.S."/>
            <person name="Gilna P."/>
        </authorList>
    </citation>
    <scope>NUCLEOTIDE SEQUENCE [LARGE SCALE GENOMIC DNA]</scope>
    <source>
        <strain>97-27</strain>
    </source>
</reference>
<keyword id="KW-0067">ATP-binding</keyword>
<keyword id="KW-0963">Cytoplasm</keyword>
<keyword id="KW-0418">Kinase</keyword>
<keyword id="KW-0520">NAD</keyword>
<keyword id="KW-0521">NADP</keyword>
<keyword id="KW-0547">Nucleotide-binding</keyword>
<keyword id="KW-0808">Transferase</keyword>
<sequence length="267" mass="30365">MADRRNLFFFYGDDKAKLVEKMKPIYRILEENGFTILDHPKNANAIVSVGDDATFLQAVRKTGFREDCLYAGISTKDEISFYCDFHIDHVDTALQEITKNEIEVRKYPTIEVDVDGSTSFHCLNEFSLRSSIIKTFVVDVHVDDLYFETFRGDGLVVSTPTGSTAYNKSLRGAVVDPLIPCFQVSELASLNNNTYRTLGSPFILNHERTLTLKLRPDGNDYPVIGMDNEALSIKQVEKAVVRLSDKQIKTVKLKNNSFWEKVQRTFL</sequence>
<dbReference type="EC" id="2.7.1.23" evidence="1"/>
<dbReference type="EMBL" id="AE017355">
    <property type="protein sequence ID" value="AAT63589.1"/>
    <property type="molecule type" value="Genomic_DNA"/>
</dbReference>
<dbReference type="RefSeq" id="WP_000785168.1">
    <property type="nucleotide sequence ID" value="NC_005957.1"/>
</dbReference>
<dbReference type="RefSeq" id="YP_038691.1">
    <property type="nucleotide sequence ID" value="NC_005957.1"/>
</dbReference>
<dbReference type="SMR" id="Q6HCN5"/>
<dbReference type="KEGG" id="btk:BT9727_4376"/>
<dbReference type="PATRIC" id="fig|281309.8.peg.4664"/>
<dbReference type="HOGENOM" id="CLU_008831_0_3_9"/>
<dbReference type="Proteomes" id="UP000001301">
    <property type="component" value="Chromosome"/>
</dbReference>
<dbReference type="GO" id="GO:0005737">
    <property type="term" value="C:cytoplasm"/>
    <property type="evidence" value="ECO:0007669"/>
    <property type="project" value="UniProtKB-SubCell"/>
</dbReference>
<dbReference type="GO" id="GO:0005524">
    <property type="term" value="F:ATP binding"/>
    <property type="evidence" value="ECO:0007669"/>
    <property type="project" value="UniProtKB-KW"/>
</dbReference>
<dbReference type="GO" id="GO:0046872">
    <property type="term" value="F:metal ion binding"/>
    <property type="evidence" value="ECO:0007669"/>
    <property type="project" value="UniProtKB-UniRule"/>
</dbReference>
<dbReference type="GO" id="GO:0051287">
    <property type="term" value="F:NAD binding"/>
    <property type="evidence" value="ECO:0007669"/>
    <property type="project" value="UniProtKB-ARBA"/>
</dbReference>
<dbReference type="GO" id="GO:0003951">
    <property type="term" value="F:NAD+ kinase activity"/>
    <property type="evidence" value="ECO:0007669"/>
    <property type="project" value="UniProtKB-UniRule"/>
</dbReference>
<dbReference type="GO" id="GO:0019674">
    <property type="term" value="P:NAD metabolic process"/>
    <property type="evidence" value="ECO:0007669"/>
    <property type="project" value="InterPro"/>
</dbReference>
<dbReference type="GO" id="GO:0006741">
    <property type="term" value="P:NADP biosynthetic process"/>
    <property type="evidence" value="ECO:0007669"/>
    <property type="project" value="UniProtKB-UniRule"/>
</dbReference>
<dbReference type="FunFam" id="2.60.200.30:FF:000002">
    <property type="entry name" value="NAD kinase"/>
    <property type="match status" value="1"/>
</dbReference>
<dbReference type="FunFam" id="3.40.50.10330:FF:000017">
    <property type="entry name" value="NAD kinase"/>
    <property type="match status" value="1"/>
</dbReference>
<dbReference type="Gene3D" id="3.40.50.10330">
    <property type="entry name" value="Probable inorganic polyphosphate/atp-NAD kinase, domain 1"/>
    <property type="match status" value="1"/>
</dbReference>
<dbReference type="Gene3D" id="2.60.200.30">
    <property type="entry name" value="Probable inorganic polyphosphate/atp-NAD kinase, domain 2"/>
    <property type="match status" value="1"/>
</dbReference>
<dbReference type="HAMAP" id="MF_00361">
    <property type="entry name" value="NAD_kinase"/>
    <property type="match status" value="1"/>
</dbReference>
<dbReference type="InterPro" id="IPR017438">
    <property type="entry name" value="ATP-NAD_kinase_N"/>
</dbReference>
<dbReference type="InterPro" id="IPR017437">
    <property type="entry name" value="ATP-NAD_kinase_PpnK-typ_C"/>
</dbReference>
<dbReference type="InterPro" id="IPR016064">
    <property type="entry name" value="NAD/diacylglycerol_kinase_sf"/>
</dbReference>
<dbReference type="InterPro" id="IPR002504">
    <property type="entry name" value="NADK"/>
</dbReference>
<dbReference type="NCBIfam" id="NF002902">
    <property type="entry name" value="PRK03501.1"/>
    <property type="match status" value="1"/>
</dbReference>
<dbReference type="PANTHER" id="PTHR20275">
    <property type="entry name" value="NAD KINASE"/>
    <property type="match status" value="1"/>
</dbReference>
<dbReference type="PANTHER" id="PTHR20275:SF9">
    <property type="entry name" value="NAD KINASE 2"/>
    <property type="match status" value="1"/>
</dbReference>
<dbReference type="Pfam" id="PF20143">
    <property type="entry name" value="NAD_kinase_C"/>
    <property type="match status" value="1"/>
</dbReference>
<dbReference type="SUPFAM" id="SSF111331">
    <property type="entry name" value="NAD kinase/diacylglycerol kinase-like"/>
    <property type="match status" value="1"/>
</dbReference>